<gene>
    <name evidence="1" type="primary">N</name>
</gene>
<keyword id="KW-0002">3D-structure</keyword>
<keyword id="KW-0167">Capsid protein</keyword>
<keyword id="KW-1139">Helical capsid protein</keyword>
<keyword id="KW-1035">Host cytoplasm</keyword>
<keyword id="KW-0945">Host-virus interaction</keyword>
<keyword id="KW-0378">Hydrolase</keyword>
<keyword id="KW-1224">Inhibition of host IKBKE by virus</keyword>
<keyword id="KW-1090">Inhibition of host innate immune response by virus</keyword>
<keyword id="KW-1113">Inhibition of host RLR pathway by virus</keyword>
<keyword id="KW-0922">Interferon antiviral system evasion</keyword>
<keyword id="KW-0464">Manganese</keyword>
<keyword id="KW-0479">Metal-binding</keyword>
<keyword id="KW-0687">Ribonucleoprotein</keyword>
<keyword id="KW-0694">RNA-binding</keyword>
<keyword id="KW-0899">Viral immunoevasion</keyword>
<keyword id="KW-0543">Viral nucleoprotein</keyword>
<keyword id="KW-0946">Virion</keyword>
<keyword id="KW-0862">Zinc</keyword>
<reference key="1">
    <citation type="journal article" date="1991" name="Virology">
        <title>Sequence analysis of the S RNA of the African arenavirus Mopeia: an unusual secondary structure feature in the intergenic region.</title>
        <authorList>
            <person name="Wilson S.M."/>
            <person name="Clegg J.C.S."/>
        </authorList>
    </citation>
    <scope>NUCLEOTIDE SEQUENCE [GENOMIC RNA]</scope>
    <source>
        <strain>800150</strain>
    </source>
</reference>
<dbReference type="EC" id="3.1.13.-" evidence="1"/>
<dbReference type="EMBL" id="M33879">
    <property type="protein sequence ID" value="AAC08701.1"/>
    <property type="molecule type" value="Genomic_RNA"/>
</dbReference>
<dbReference type="PIR" id="B38546">
    <property type="entry name" value="B38546"/>
</dbReference>
<dbReference type="PDB" id="6T2A">
    <property type="method" value="X-ray"/>
    <property type="resolution" value="2.00 A"/>
    <property type="chains" value="A/B=365-570"/>
</dbReference>
<dbReference type="PDB" id="6T6L">
    <property type="method" value="X-ray"/>
    <property type="resolution" value="1.76 A"/>
    <property type="chains" value="A/B/C=365-570"/>
</dbReference>
<dbReference type="PDBsum" id="6T2A"/>
<dbReference type="PDBsum" id="6T6L"/>
<dbReference type="SMR" id="P19239"/>
<dbReference type="GO" id="GO:0019029">
    <property type="term" value="C:helical viral capsid"/>
    <property type="evidence" value="ECO:0007669"/>
    <property type="project" value="UniProtKB-UniRule"/>
</dbReference>
<dbReference type="GO" id="GO:0030430">
    <property type="term" value="C:host cell cytoplasm"/>
    <property type="evidence" value="ECO:0007669"/>
    <property type="project" value="UniProtKB-SubCell"/>
</dbReference>
<dbReference type="GO" id="GO:1990904">
    <property type="term" value="C:ribonucleoprotein complex"/>
    <property type="evidence" value="ECO:0007669"/>
    <property type="project" value="UniProtKB-KW"/>
</dbReference>
<dbReference type="GO" id="GO:0019013">
    <property type="term" value="C:viral nucleocapsid"/>
    <property type="evidence" value="ECO:0007669"/>
    <property type="project" value="UniProtKB-UniRule"/>
</dbReference>
<dbReference type="GO" id="GO:0016787">
    <property type="term" value="F:hydrolase activity"/>
    <property type="evidence" value="ECO:0007669"/>
    <property type="project" value="UniProtKB-KW"/>
</dbReference>
<dbReference type="GO" id="GO:0046872">
    <property type="term" value="F:metal ion binding"/>
    <property type="evidence" value="ECO:0007669"/>
    <property type="project" value="UniProtKB-UniRule"/>
</dbReference>
<dbReference type="GO" id="GO:0003723">
    <property type="term" value="F:RNA binding"/>
    <property type="evidence" value="ECO:0007669"/>
    <property type="project" value="UniProtKB-UniRule"/>
</dbReference>
<dbReference type="GO" id="GO:0039689">
    <property type="term" value="P:negative stranded viral RNA replication"/>
    <property type="evidence" value="ECO:0000250"/>
    <property type="project" value="UniProtKB"/>
</dbReference>
<dbReference type="GO" id="GO:0039696">
    <property type="term" value="P:RNA-templated viral transcription"/>
    <property type="evidence" value="ECO:0000250"/>
    <property type="project" value="UniProtKB"/>
</dbReference>
<dbReference type="GO" id="GO:0039724">
    <property type="term" value="P:symbiont-mediated suppression of host cytoplasmic pattern recognition receptor signaling pathway via inhibition of IKBKE activity"/>
    <property type="evidence" value="ECO:0007669"/>
    <property type="project" value="UniProtKB-UniRule"/>
</dbReference>
<dbReference type="FunFam" id="1.10.150.550:FF:000001">
    <property type="entry name" value="Nucleoprotein"/>
    <property type="match status" value="1"/>
</dbReference>
<dbReference type="FunFam" id="1.10.150.550:FF:000002">
    <property type="entry name" value="Nucleoprotein"/>
    <property type="match status" value="1"/>
</dbReference>
<dbReference type="FunFam" id="3.30.420.410:FF:000001">
    <property type="entry name" value="Nucleoprotein"/>
    <property type="match status" value="1"/>
</dbReference>
<dbReference type="Gene3D" id="3.30.420.410">
    <property type="entry name" value="Arenaviral nucleoprotein, C-terminal domain"/>
    <property type="match status" value="1"/>
</dbReference>
<dbReference type="Gene3D" id="1.10.150.550">
    <property type="entry name" value="Arenavirus nucleocapsid protein, head domain"/>
    <property type="match status" value="3"/>
</dbReference>
<dbReference type="HAMAP" id="MF_04085">
    <property type="entry name" value="ARENA_NCAP"/>
    <property type="match status" value="1"/>
</dbReference>
<dbReference type="InterPro" id="IPR000229">
    <property type="entry name" value="Nucleocapsid_arenaviridae"/>
</dbReference>
<dbReference type="InterPro" id="IPR035084">
    <property type="entry name" value="Nucleocapsid_C_arenaviridae"/>
</dbReference>
<dbReference type="InterPro" id="IPR038115">
    <property type="entry name" value="Nucleocapsid_C_sf"/>
</dbReference>
<dbReference type="InterPro" id="IPR035083">
    <property type="entry name" value="Nucleocapsid_N_arenaviridae"/>
</dbReference>
<dbReference type="Pfam" id="PF17290">
    <property type="entry name" value="Arena_ncap_C"/>
    <property type="match status" value="1"/>
</dbReference>
<dbReference type="Pfam" id="PF00843">
    <property type="entry name" value="Arena_nucleocap"/>
    <property type="match status" value="1"/>
</dbReference>
<dbReference type="PIRSF" id="PIRSF004029">
    <property type="entry name" value="N_ArenaV"/>
    <property type="match status" value="1"/>
</dbReference>
<evidence type="ECO:0000255" key="1">
    <source>
        <dbReference type="HAMAP-Rule" id="MF_04085"/>
    </source>
</evidence>
<evidence type="ECO:0007829" key="2">
    <source>
        <dbReference type="PDB" id="6T2A"/>
    </source>
</evidence>
<evidence type="ECO:0007829" key="3">
    <source>
        <dbReference type="PDB" id="6T6L"/>
    </source>
</evidence>
<comment type="function">
    <text evidence="1">Encapsidates the genome, protecting it from nucleases. The encapsidated genomic RNA is termed the nucleocapsid (NC). Serves as template for viral transcription and replication. The increased presence of protein N in host cell does not seem to trigger the switch from transcription to replication as observed in other negative strain RNA viruses. Through the interaction with host IKBKE, strongly inhibits the phosphorylation and nuclear translocation of host IRF3, a protein involved in interferon activation pathway, leading to the inhibition of interferon-beta and IRF3-dependent promoters activation. Also encodes a functional 3'-5' exoribonuclease that degrades preferentially dsRNA substrates and thereby participates in the suppression of interferon induction.</text>
</comment>
<comment type="subunit">
    <text evidence="1">Homomultimerizes to form the nucleocapsid. Binds to viral genomic RNA. Interacts with glycoprotein G2. Interacts with protein Z; this interaction probably directs the encapsidated genome to budding sites. Interacts with protein L; this interaction does not interfere with Z-L interaction. Interacts with host IKBKE (via Protein kinase domain); the interaction inhibits IKBKE kinase activity.</text>
</comment>
<comment type="subcellular location">
    <subcellularLocation>
        <location evidence="1">Virion</location>
    </subcellularLocation>
    <subcellularLocation>
        <location evidence="1">Host cytoplasm</location>
    </subcellularLocation>
</comment>
<comment type="domain">
    <text evidence="1">The N-terminal region is important for the cap-binding activity while the C-terminal region contains the 3'-5' exoribonuclease activity. A CCHE zinc binding site is present in the C-terminal region and may thus contribute to the substrate binding and/or the specificity of the exonuclease activity.</text>
</comment>
<comment type="similarity">
    <text evidence="1">Belongs to the arenaviridae nucleocapsid protein family.</text>
</comment>
<proteinExistence type="evidence at protein level"/>
<name>NCAP_MOPEI</name>
<accession>P19239</accession>
<sequence>MSNSKEVKSFLWTQSLRRELSGYCSNIKIQVIKDAQALLHGLDFSEVANVQRLMRKEKRDDSDLKRLRDLNQAVNNLVELKSVQQKNVLRVGTLTSDDLLVLAADLDRLKAKVIRGERPLAAGVYMGNLTAQQLEQRRVLLQMVGMGGGFRAGNTLGDGIVRVWDVRNPELLNNQFGTMPSLTIACMCKQGQADLNDVIQSLSDLGLVYTAKYPNMSDLDKLSQTHPILGIIEPKKSAINISGYNFSLSAAVKAGACLIDGGNMLETIKVTKSNLEGILKAALKVKRSLGMFVSDTPGERNPYENLLYKLCLSGEGWPYIASRTSIVGRAWDNTTVDLSGDVQQNAKPDKGNSNRLAQAQGMPAGLTYSQTMELKDSMLQLDPNAKTWIDIEGRPEDPVEIAIYQPNNGQYIHFYREPTDIKQFKQDSKHSHGIDIQDLFSVQPGLTSAVIESLPKNMVLSCQGADDIRKLLDSQNRRDIKLIDVSMQKDDARKFEDKIWDEYKHLCRMHTGIVTQKKKRGGKEEVTPHCALLDCLMFEAAVIGSPQIPTPRPVLSRDLVFRTGPPRVVL</sequence>
<feature type="chain" id="PRO_0000079195" description="Nucleoprotein">
    <location>
        <begin position="1"/>
        <end position="570"/>
    </location>
</feature>
<feature type="region of interest" description="Binding site for the cap structure m7GTP" evidence="1">
    <location>
        <begin position="54"/>
        <end position="241"/>
    </location>
</feature>
<feature type="binding site" evidence="1">
    <location>
        <position position="390"/>
    </location>
    <ligand>
        <name>Mn(2+)</name>
        <dbReference type="ChEBI" id="CHEBI:29035"/>
    </ligand>
</feature>
<feature type="binding site" evidence="1">
    <location>
        <position position="392"/>
    </location>
    <ligand>
        <name>Mn(2+)</name>
        <dbReference type="ChEBI" id="CHEBI:29035"/>
    </ligand>
</feature>
<feature type="binding site" evidence="1">
    <location>
        <position position="400"/>
    </location>
    <ligand>
        <name>Zn(2+)</name>
        <dbReference type="ChEBI" id="CHEBI:29105"/>
    </ligand>
</feature>
<feature type="binding site" evidence="1">
    <location>
        <position position="507"/>
    </location>
    <ligand>
        <name>Zn(2+)</name>
        <dbReference type="ChEBI" id="CHEBI:29105"/>
    </ligand>
</feature>
<feature type="binding site" evidence="1">
    <location>
        <position position="510"/>
    </location>
    <ligand>
        <name>Zn(2+)</name>
        <dbReference type="ChEBI" id="CHEBI:29105"/>
    </ligand>
</feature>
<feature type="binding site" evidence="1">
    <location>
        <position position="530"/>
    </location>
    <ligand>
        <name>Zn(2+)</name>
        <dbReference type="ChEBI" id="CHEBI:29105"/>
    </ligand>
</feature>
<feature type="binding site" evidence="1">
    <location>
        <position position="534"/>
    </location>
    <ligand>
        <name>Mn(2+)</name>
        <dbReference type="ChEBI" id="CHEBI:29035"/>
    </ligand>
</feature>
<feature type="site" description="Important for exonuclease activity" evidence="1">
    <location>
        <position position="467"/>
    </location>
</feature>
<feature type="helix" evidence="3">
    <location>
        <begin position="368"/>
        <end position="378"/>
    </location>
</feature>
<feature type="strand" evidence="3">
    <location>
        <begin position="387"/>
        <end position="393"/>
    </location>
</feature>
<feature type="strand" evidence="3">
    <location>
        <begin position="400"/>
        <end position="404"/>
    </location>
</feature>
<feature type="turn" evidence="3">
    <location>
        <begin position="406"/>
        <end position="408"/>
    </location>
</feature>
<feature type="strand" evidence="3">
    <location>
        <begin position="410"/>
        <end position="415"/>
    </location>
</feature>
<feature type="helix" evidence="3">
    <location>
        <begin position="421"/>
        <end position="430"/>
    </location>
</feature>
<feature type="helix" evidence="3">
    <location>
        <begin position="436"/>
        <end position="439"/>
    </location>
</feature>
<feature type="helix" evidence="3">
    <location>
        <begin position="446"/>
        <end position="453"/>
    </location>
</feature>
<feature type="strand" evidence="3">
    <location>
        <begin position="459"/>
        <end position="464"/>
    </location>
</feature>
<feature type="helix" evidence="3">
    <location>
        <begin position="466"/>
        <end position="474"/>
    </location>
</feature>
<feature type="strand" evidence="3">
    <location>
        <begin position="480"/>
        <end position="484"/>
    </location>
</feature>
<feature type="helix" evidence="3">
    <location>
        <begin position="489"/>
        <end position="492"/>
    </location>
</feature>
<feature type="turn" evidence="3">
    <location>
        <begin position="493"/>
        <end position="495"/>
    </location>
</feature>
<feature type="helix" evidence="3">
    <location>
        <begin position="496"/>
        <end position="503"/>
    </location>
</feature>
<feature type="helix" evidence="3">
    <location>
        <begin position="504"/>
        <end position="506"/>
    </location>
</feature>
<feature type="strand" evidence="3">
    <location>
        <begin position="514"/>
        <end position="517"/>
    </location>
</feature>
<feature type="strand" evidence="3">
    <location>
        <begin position="521"/>
        <end position="526"/>
    </location>
</feature>
<feature type="helix" evidence="3">
    <location>
        <begin position="531"/>
        <end position="543"/>
    </location>
</feature>
<feature type="strand" evidence="3">
    <location>
        <begin position="552"/>
        <end position="555"/>
    </location>
</feature>
<feature type="helix" evidence="3">
    <location>
        <begin position="557"/>
        <end position="560"/>
    </location>
</feature>
<feature type="strand" evidence="2">
    <location>
        <begin position="561"/>
        <end position="563"/>
    </location>
</feature>
<organism>
    <name type="scientific">Mopeia virus</name>
    <name type="common">MOPV</name>
    <dbReference type="NCBI Taxonomy" id="3052320"/>
    <lineage>
        <taxon>Viruses</taxon>
        <taxon>Riboviria</taxon>
        <taxon>Orthornavirae</taxon>
        <taxon>Negarnaviricota</taxon>
        <taxon>Polyploviricotina</taxon>
        <taxon>Ellioviricetes</taxon>
        <taxon>Bunyavirales</taxon>
        <taxon>Arenaviridae</taxon>
        <taxon>Mammarenavirus</taxon>
    </lineage>
</organism>
<protein>
    <recommendedName>
        <fullName evidence="1">Nucleoprotein</fullName>
        <ecNumber evidence="1">3.1.13.-</ecNumber>
    </recommendedName>
    <alternativeName>
        <fullName evidence="1">Nucleocapsid protein</fullName>
    </alternativeName>
    <alternativeName>
        <fullName evidence="1">Protein N</fullName>
    </alternativeName>
</protein>
<organismHost>
    <name type="scientific">Mastomys natalensis</name>
    <name type="common">African soft-furred rat</name>
    <name type="synonym">Praomys natalensis</name>
    <dbReference type="NCBI Taxonomy" id="10112"/>
</organismHost>